<keyword id="KW-0963">Cytoplasm</keyword>
<keyword id="KW-0342">GTP-binding</keyword>
<keyword id="KW-0547">Nucleotide-binding</keyword>
<keyword id="KW-0648">Protein biosynthesis</keyword>
<reference key="1">
    <citation type="journal article" date="2007" name="PLoS ONE">
        <title>Complete genomic characterization of a pathogenic A.II strain of Francisella tularensis subspecies tularensis.</title>
        <authorList>
            <person name="Beckstrom-Sternberg S.M."/>
            <person name="Auerbach R.K."/>
            <person name="Godbole S."/>
            <person name="Pearson J.V."/>
            <person name="Beckstrom-Sternberg J.S."/>
            <person name="Deng Z."/>
            <person name="Munk C."/>
            <person name="Kubota K."/>
            <person name="Zhou Y."/>
            <person name="Bruce D."/>
            <person name="Noronha J."/>
            <person name="Scheuermann R.H."/>
            <person name="Wang A."/>
            <person name="Wei X."/>
            <person name="Wang J."/>
            <person name="Hao J."/>
            <person name="Wagner D.M."/>
            <person name="Brettin T.S."/>
            <person name="Brown N."/>
            <person name="Gilna P."/>
            <person name="Keim P.S."/>
        </authorList>
    </citation>
    <scope>NUCLEOTIDE SEQUENCE [LARGE SCALE GENOMIC DNA]</scope>
    <source>
        <strain>WY96-3418</strain>
    </source>
</reference>
<evidence type="ECO:0000255" key="1">
    <source>
        <dbReference type="HAMAP-Rule" id="MF_00072"/>
    </source>
</evidence>
<sequence>MSEYLQQIAKRRTFAIISHPDAGKTTITEKMLLFGNAIKTAGTVKAKKSGIHATSDWMEMEKQRGISITTSVMQFPYNGRIINLLDTPGHEDFSEDTYRTLTAVDSALMVVDAVKGVEDRTIKLMNVCRLRDTPIVTFMNKFDRDTRDPLELLDEVENILKIKCAPMNWPIGMGKYFKGVYDLYNDEVTLFETGHGHEIYPYKKIKGLANAKDAIGIDLYEDLEMEIDLVRGASHEFDEQEFLEGNLTPVYFGTALSNFGVKEMMDGFTRYAPAPQHREADQRVVAADEQKLTGFVFKIQANMDEKHRNRIAFFRICSGKYEKGMKIFHERTGKQMQISKALTFMAGEREQVEEGYAGDIIGLHNHGSIQIGDSFTQGEKLKFKGIPNFAPEIFKRVKLNDPLKMKALQKGLVQLSEEGATQVFKPFISNDLVLGAVGVLQFDVVAQRLASEYNVKCSYEGVNVTLARWIFCNDEKKLNDFKKKYEVNLAYDGAGYLTYLAPTGVNLQLAQEKNPDIIFSATREH</sequence>
<comment type="function">
    <text evidence="1">Increases the formation of ribosomal termination complexes and stimulates activities of RF-1 and RF-2. It binds guanine nucleotides and has strong preference for UGA stop codons. It may interact directly with the ribosome. The stimulation of RF-1 and RF-2 is significantly reduced by GTP and GDP, but not by GMP.</text>
</comment>
<comment type="subcellular location">
    <subcellularLocation>
        <location evidence="1">Cytoplasm</location>
    </subcellularLocation>
</comment>
<comment type="similarity">
    <text evidence="1">Belongs to the TRAFAC class translation factor GTPase superfamily. Classic translation factor GTPase family. PrfC subfamily.</text>
</comment>
<name>RF3_FRATW</name>
<protein>
    <recommendedName>
        <fullName evidence="1">Peptide chain release factor 3</fullName>
        <shortName evidence="1">RF-3</shortName>
    </recommendedName>
</protein>
<dbReference type="EMBL" id="CP000608">
    <property type="protein sequence ID" value="ABO46177.1"/>
    <property type="molecule type" value="Genomic_DNA"/>
</dbReference>
<dbReference type="RefSeq" id="WP_003019516.1">
    <property type="nucleotide sequence ID" value="NC_009257.1"/>
</dbReference>
<dbReference type="SMR" id="A4IW75"/>
<dbReference type="KEGG" id="ftw:FTW_0203"/>
<dbReference type="HOGENOM" id="CLU_002794_2_1_6"/>
<dbReference type="GO" id="GO:0005829">
    <property type="term" value="C:cytosol"/>
    <property type="evidence" value="ECO:0007669"/>
    <property type="project" value="TreeGrafter"/>
</dbReference>
<dbReference type="GO" id="GO:0005525">
    <property type="term" value="F:GTP binding"/>
    <property type="evidence" value="ECO:0007669"/>
    <property type="project" value="UniProtKB-UniRule"/>
</dbReference>
<dbReference type="GO" id="GO:0003924">
    <property type="term" value="F:GTPase activity"/>
    <property type="evidence" value="ECO:0007669"/>
    <property type="project" value="InterPro"/>
</dbReference>
<dbReference type="GO" id="GO:0097216">
    <property type="term" value="F:guanosine tetraphosphate binding"/>
    <property type="evidence" value="ECO:0007669"/>
    <property type="project" value="UniProtKB-ARBA"/>
</dbReference>
<dbReference type="GO" id="GO:0016150">
    <property type="term" value="F:translation release factor activity, codon nonspecific"/>
    <property type="evidence" value="ECO:0007669"/>
    <property type="project" value="TreeGrafter"/>
</dbReference>
<dbReference type="GO" id="GO:0016149">
    <property type="term" value="F:translation release factor activity, codon specific"/>
    <property type="evidence" value="ECO:0007669"/>
    <property type="project" value="UniProtKB-UniRule"/>
</dbReference>
<dbReference type="GO" id="GO:0006449">
    <property type="term" value="P:regulation of translational termination"/>
    <property type="evidence" value="ECO:0007669"/>
    <property type="project" value="UniProtKB-UniRule"/>
</dbReference>
<dbReference type="CDD" id="cd04169">
    <property type="entry name" value="RF3"/>
    <property type="match status" value="1"/>
</dbReference>
<dbReference type="CDD" id="cd16259">
    <property type="entry name" value="RF3_III"/>
    <property type="match status" value="1"/>
</dbReference>
<dbReference type="FunFam" id="2.40.30.10:FF:000040">
    <property type="entry name" value="Peptide chain release factor 3"/>
    <property type="match status" value="1"/>
</dbReference>
<dbReference type="FunFam" id="3.30.70.3280:FF:000001">
    <property type="entry name" value="Peptide chain release factor 3"/>
    <property type="match status" value="1"/>
</dbReference>
<dbReference type="FunFam" id="3.40.50.300:FF:000542">
    <property type="entry name" value="Peptide chain release factor 3"/>
    <property type="match status" value="1"/>
</dbReference>
<dbReference type="Gene3D" id="3.40.50.300">
    <property type="entry name" value="P-loop containing nucleotide triphosphate hydrolases"/>
    <property type="match status" value="1"/>
</dbReference>
<dbReference type="Gene3D" id="3.30.70.3280">
    <property type="entry name" value="Peptide chain release factor 3, domain III"/>
    <property type="match status" value="1"/>
</dbReference>
<dbReference type="Gene3D" id="2.40.30.10">
    <property type="entry name" value="Translation factors"/>
    <property type="match status" value="1"/>
</dbReference>
<dbReference type="HAMAP" id="MF_00072">
    <property type="entry name" value="Rel_fac_3"/>
    <property type="match status" value="1"/>
</dbReference>
<dbReference type="InterPro" id="IPR053905">
    <property type="entry name" value="EF-G-like_DII"/>
</dbReference>
<dbReference type="InterPro" id="IPR035647">
    <property type="entry name" value="EFG_III/V"/>
</dbReference>
<dbReference type="InterPro" id="IPR031157">
    <property type="entry name" value="G_TR_CS"/>
</dbReference>
<dbReference type="InterPro" id="IPR027417">
    <property type="entry name" value="P-loop_NTPase"/>
</dbReference>
<dbReference type="InterPro" id="IPR004548">
    <property type="entry name" value="PrfC"/>
</dbReference>
<dbReference type="InterPro" id="IPR032090">
    <property type="entry name" value="RF3_C"/>
</dbReference>
<dbReference type="InterPro" id="IPR038467">
    <property type="entry name" value="RF3_dom_3_sf"/>
</dbReference>
<dbReference type="InterPro" id="IPR041732">
    <property type="entry name" value="RF3_GTP-bd"/>
</dbReference>
<dbReference type="InterPro" id="IPR005225">
    <property type="entry name" value="Small_GTP-bd"/>
</dbReference>
<dbReference type="InterPro" id="IPR000795">
    <property type="entry name" value="T_Tr_GTP-bd_dom"/>
</dbReference>
<dbReference type="InterPro" id="IPR009000">
    <property type="entry name" value="Transl_B-barrel_sf"/>
</dbReference>
<dbReference type="NCBIfam" id="TIGR00503">
    <property type="entry name" value="prfC"/>
    <property type="match status" value="1"/>
</dbReference>
<dbReference type="NCBIfam" id="NF001964">
    <property type="entry name" value="PRK00741.1"/>
    <property type="match status" value="1"/>
</dbReference>
<dbReference type="NCBIfam" id="TIGR00231">
    <property type="entry name" value="small_GTP"/>
    <property type="match status" value="1"/>
</dbReference>
<dbReference type="PANTHER" id="PTHR43556">
    <property type="entry name" value="PEPTIDE CHAIN RELEASE FACTOR RF3"/>
    <property type="match status" value="1"/>
</dbReference>
<dbReference type="PANTHER" id="PTHR43556:SF2">
    <property type="entry name" value="PEPTIDE CHAIN RELEASE FACTOR RF3"/>
    <property type="match status" value="1"/>
</dbReference>
<dbReference type="Pfam" id="PF22042">
    <property type="entry name" value="EF-G_D2"/>
    <property type="match status" value="1"/>
</dbReference>
<dbReference type="Pfam" id="PF00009">
    <property type="entry name" value="GTP_EFTU"/>
    <property type="match status" value="1"/>
</dbReference>
<dbReference type="Pfam" id="PF16658">
    <property type="entry name" value="RF3_C"/>
    <property type="match status" value="1"/>
</dbReference>
<dbReference type="PRINTS" id="PR00315">
    <property type="entry name" value="ELONGATNFCT"/>
</dbReference>
<dbReference type="SUPFAM" id="SSF54980">
    <property type="entry name" value="EF-G C-terminal domain-like"/>
    <property type="match status" value="1"/>
</dbReference>
<dbReference type="SUPFAM" id="SSF52540">
    <property type="entry name" value="P-loop containing nucleoside triphosphate hydrolases"/>
    <property type="match status" value="1"/>
</dbReference>
<dbReference type="SUPFAM" id="SSF50447">
    <property type="entry name" value="Translation proteins"/>
    <property type="match status" value="1"/>
</dbReference>
<dbReference type="PROSITE" id="PS00301">
    <property type="entry name" value="G_TR_1"/>
    <property type="match status" value="1"/>
</dbReference>
<dbReference type="PROSITE" id="PS51722">
    <property type="entry name" value="G_TR_2"/>
    <property type="match status" value="1"/>
</dbReference>
<feature type="chain" id="PRO_1000023649" description="Peptide chain release factor 3">
    <location>
        <begin position="1"/>
        <end position="525"/>
    </location>
</feature>
<feature type="domain" description="tr-type G">
    <location>
        <begin position="9"/>
        <end position="276"/>
    </location>
</feature>
<feature type="binding site" evidence="1">
    <location>
        <begin position="18"/>
        <end position="25"/>
    </location>
    <ligand>
        <name>GTP</name>
        <dbReference type="ChEBI" id="CHEBI:37565"/>
    </ligand>
</feature>
<feature type="binding site" evidence="1">
    <location>
        <begin position="86"/>
        <end position="90"/>
    </location>
    <ligand>
        <name>GTP</name>
        <dbReference type="ChEBI" id="CHEBI:37565"/>
    </ligand>
</feature>
<feature type="binding site" evidence="1">
    <location>
        <begin position="140"/>
        <end position="143"/>
    </location>
    <ligand>
        <name>GTP</name>
        <dbReference type="ChEBI" id="CHEBI:37565"/>
    </ligand>
</feature>
<accession>A4IW75</accession>
<organism>
    <name type="scientific">Francisella tularensis subsp. tularensis (strain WY96-3418)</name>
    <dbReference type="NCBI Taxonomy" id="418136"/>
    <lineage>
        <taxon>Bacteria</taxon>
        <taxon>Pseudomonadati</taxon>
        <taxon>Pseudomonadota</taxon>
        <taxon>Gammaproteobacteria</taxon>
        <taxon>Thiotrichales</taxon>
        <taxon>Francisellaceae</taxon>
        <taxon>Francisella</taxon>
    </lineage>
</organism>
<proteinExistence type="inferred from homology"/>
<gene>
    <name evidence="1" type="primary">prfC</name>
    <name type="ordered locus">FTW_0203</name>
</gene>